<keyword id="KW-0058">Aromatic hydrocarbons catabolism</keyword>
<keyword id="KW-0413">Isomerase</keyword>
<dbReference type="EC" id="5.3.3.4" evidence="2"/>
<dbReference type="EMBL" id="U77659">
    <property type="protein sequence ID" value="AAC31768.1"/>
    <property type="molecule type" value="Genomic_DNA"/>
</dbReference>
<dbReference type="PIR" id="T46826">
    <property type="entry name" value="T46826"/>
</dbReference>
<dbReference type="SMR" id="O33951"/>
<dbReference type="UniPathway" id="UPA00157">
    <property type="reaction ID" value="UER00260"/>
</dbReference>
<dbReference type="GO" id="GO:0016159">
    <property type="term" value="F:muconolactone delta-isomerase activity"/>
    <property type="evidence" value="ECO:0007669"/>
    <property type="project" value="UniProtKB-EC"/>
</dbReference>
<dbReference type="GO" id="GO:0042952">
    <property type="term" value="P:beta-ketoadipate pathway"/>
    <property type="evidence" value="ECO:0007669"/>
    <property type="project" value="UniProtKB-UniPathway"/>
</dbReference>
<dbReference type="Gene3D" id="3.30.70.1060">
    <property type="entry name" value="Dimeric alpha+beta barrel"/>
    <property type="match status" value="1"/>
</dbReference>
<dbReference type="InterPro" id="IPR011008">
    <property type="entry name" value="Dimeric_a/b-barrel"/>
</dbReference>
<dbReference type="InterPro" id="IPR026029">
    <property type="entry name" value="MLI_dom"/>
</dbReference>
<dbReference type="InterPro" id="IPR003464">
    <property type="entry name" value="Muconolactone_d_Isoase"/>
</dbReference>
<dbReference type="NCBIfam" id="TIGR03221">
    <property type="entry name" value="muco_delta"/>
    <property type="match status" value="1"/>
</dbReference>
<dbReference type="Pfam" id="PF02426">
    <property type="entry name" value="MIase"/>
    <property type="match status" value="1"/>
</dbReference>
<dbReference type="PIRSF" id="PIRSF001486">
    <property type="entry name" value="CatC"/>
    <property type="match status" value="1"/>
</dbReference>
<dbReference type="SUPFAM" id="SSF54909">
    <property type="entry name" value="Dimeric alpha+beta barrel"/>
    <property type="match status" value="1"/>
</dbReference>
<proteinExistence type="inferred from homology"/>
<gene>
    <name type="primary">catC2</name>
</gene>
<comment type="catalytic activity">
    <reaction evidence="2">
        <text>(S)-muconolactone = (4,5-dihydro-5-oxofuran-2-yl)-acetate</text>
        <dbReference type="Rhea" id="RHEA:12348"/>
        <dbReference type="ChEBI" id="CHEBI:58425"/>
        <dbReference type="ChEBI" id="CHEBI:58736"/>
        <dbReference type="EC" id="5.3.3.4"/>
    </reaction>
</comment>
<comment type="pathway">
    <text>Aromatic compound metabolism; beta-ketoadipate pathway; 5-oxo-4,5-dihydro-2-furylacetate from catechol: step 3/3.</text>
</comment>
<comment type="subunit">
    <text evidence="1">Homodecamer.</text>
</comment>
<comment type="similarity">
    <text evidence="3">Belongs to the muconolactone Delta-isomerase family.</text>
</comment>
<accession>O33951</accession>
<name>CATC2_ACILW</name>
<organism>
    <name type="scientific">Acinetobacter lwoffii</name>
    <dbReference type="NCBI Taxonomy" id="28090"/>
    <lineage>
        <taxon>Bacteria</taxon>
        <taxon>Pseudomonadati</taxon>
        <taxon>Pseudomonadota</taxon>
        <taxon>Gammaproteobacteria</taxon>
        <taxon>Moraxellales</taxon>
        <taxon>Moraxellaceae</taxon>
        <taxon>Acinetobacter</taxon>
    </lineage>
</organism>
<sequence>MLFHVEMTVNLPSDMDAERAARLKSDEKAMSQKLQQEGVWRHLWRIAGRYANISVFDVESPAHLHDVLSQLPLFPYMDVEVRALCRHASSIHDDDR</sequence>
<feature type="chain" id="PRO_0000089332" description="Muconolactone Delta-isomerase 2">
    <location>
        <begin position="1"/>
        <end position="96"/>
    </location>
</feature>
<protein>
    <recommendedName>
        <fullName>Muconolactone Delta-isomerase 2</fullName>
        <shortName>MIase 2</shortName>
        <ecNumber evidence="2">5.3.3.4</ecNumber>
    </recommendedName>
</protein>
<reference key="1">
    <citation type="journal article" date="1997" name="J. Bacteriol.">
        <title>Cloning and characterization of two catA genes in Acinetobacter lwoffii K24.</title>
        <authorList>
            <person name="Kim S.I."/>
            <person name="Leem S.-H."/>
            <person name="Choi J.-S."/>
            <person name="Chung Y.H."/>
            <person name="Kim S."/>
            <person name="Park Y.-M."/>
            <person name="Park Y.K."/>
            <person name="Lee Y.N."/>
            <person name="Ha K.-S."/>
        </authorList>
    </citation>
    <scope>NUCLEOTIDE SEQUENCE [GENOMIC DNA]</scope>
    <source>
        <strain>K24</strain>
    </source>
</reference>
<evidence type="ECO:0000250" key="1"/>
<evidence type="ECO:0000250" key="2">
    <source>
        <dbReference type="UniProtKB" id="P00948"/>
    </source>
</evidence>
<evidence type="ECO:0000305" key="3"/>